<protein>
    <recommendedName>
        <fullName>Methylamine utilization protein MauF</fullName>
    </recommendedName>
</protein>
<reference key="1">
    <citation type="submission" date="1996-01" db="EMBL/GenBank/DDBJ databases">
        <authorList>
            <person name="Huitema F."/>
            <person name="Duine J.A."/>
            <person name="Canters G.W."/>
        </authorList>
    </citation>
    <scope>NUCLEOTIDE SEQUENCE [MRNA]</scope>
</reference>
<dbReference type="EMBL" id="L36952">
    <property type="protein sequence ID" value="AAA85386.1"/>
    <property type="molecule type" value="mRNA"/>
</dbReference>
<dbReference type="RefSeq" id="WP_036750441.1">
    <property type="nucleotide sequence ID" value="NZ_CP035286.1"/>
</dbReference>
<dbReference type="eggNOG" id="COG0785">
    <property type="taxonomic scope" value="Bacteria"/>
</dbReference>
<dbReference type="OrthoDB" id="7931642at2"/>
<dbReference type="UniPathway" id="UPA00895"/>
<dbReference type="GO" id="GO:0005886">
    <property type="term" value="C:plasma membrane"/>
    <property type="evidence" value="ECO:0007669"/>
    <property type="project" value="UniProtKB-SubCell"/>
</dbReference>
<accession>Q56463</accession>
<comment type="pathway">
    <text>One-carbon metabolism; methylamine degradation.</text>
</comment>
<comment type="subcellular location">
    <subcellularLocation>
        <location evidence="2">Cell membrane</location>
        <topology evidence="2">Multi-pass membrane protein</topology>
    </subcellularLocation>
</comment>
<sequence>MASLDNFDMAAGRTDGVADCVAFPGRFSTWTRALILAASAAGGGAAALAMDAAHVALVLGLAAFAGGLLSTWSPCGYSSISLLRPTGKGARAVLDWLPTFATHGLGYALGALILGTLLGAIGGIAGLSGFATSFGLGLLAVIGLAYGAHQLDFLRVPYPQRRAQVPHDARQRFPKWVVGGLYGLSLGLDYLTYVQTPLLYLVTAAAVLSGNVAEAVALIAIFNLGRYLPVAVNLLPVTDYQIQSWLGRNQERAAIADGAILTAVGAAFAMLALA</sequence>
<proteinExistence type="evidence at transcript level"/>
<name>MAUF_PARVE</name>
<evidence type="ECO:0000255" key="1"/>
<evidence type="ECO:0000305" key="2"/>
<gene>
    <name type="primary">mauF</name>
    <name type="synonym">madF</name>
</gene>
<keyword id="KW-1003">Cell membrane</keyword>
<keyword id="KW-0472">Membrane</keyword>
<keyword id="KW-0812">Transmembrane</keyword>
<keyword id="KW-1133">Transmembrane helix</keyword>
<organism>
    <name type="scientific">Paracoccus versutus</name>
    <name type="common">Thiobacillus versutus</name>
    <dbReference type="NCBI Taxonomy" id="34007"/>
    <lineage>
        <taxon>Bacteria</taxon>
        <taxon>Pseudomonadati</taxon>
        <taxon>Pseudomonadota</taxon>
        <taxon>Alphaproteobacteria</taxon>
        <taxon>Rhodobacterales</taxon>
        <taxon>Paracoccaceae</taxon>
        <taxon>Paracoccus</taxon>
    </lineage>
</organism>
<feature type="chain" id="PRO_0000208941" description="Methylamine utilization protein MauF">
    <location>
        <begin position="1"/>
        <end position="274"/>
    </location>
</feature>
<feature type="transmembrane region" description="Helical" evidence="1">
    <location>
        <begin position="30"/>
        <end position="50"/>
    </location>
</feature>
<feature type="transmembrane region" description="Helical" evidence="1">
    <location>
        <begin position="52"/>
        <end position="72"/>
    </location>
</feature>
<feature type="transmembrane region" description="Helical" evidence="1">
    <location>
        <begin position="105"/>
        <end position="125"/>
    </location>
</feature>
<feature type="transmembrane region" description="Helical" evidence="1">
    <location>
        <begin position="127"/>
        <end position="147"/>
    </location>
</feature>
<feature type="transmembrane region" description="Helical" evidence="1">
    <location>
        <begin position="176"/>
        <end position="196"/>
    </location>
</feature>
<feature type="transmembrane region" description="Helical" evidence="1">
    <location>
        <begin position="202"/>
        <end position="222"/>
    </location>
</feature>
<feature type="transmembrane region" description="Helical" evidence="1">
    <location>
        <begin position="253"/>
        <end position="273"/>
    </location>
</feature>